<reference key="1">
    <citation type="journal article" date="1994" name="EMBO J.">
        <title>cdt1 is an essential target of the Cdc10/Sct1 transcription factor: requirement for DNA replication and inhibition of mitosis.</title>
        <authorList>
            <person name="Hofmann J.F.X."/>
            <person name="Beach D."/>
        </authorList>
    </citation>
    <scope>NUCLEOTIDE SEQUENCE [MRNA]</scope>
    <scope>FUNCTION</scope>
</reference>
<reference key="2">
    <citation type="journal article" date="2002" name="Nature">
        <title>The genome sequence of Schizosaccharomyces pombe.</title>
        <authorList>
            <person name="Wood V."/>
            <person name="Gwilliam R."/>
            <person name="Rajandream M.A."/>
            <person name="Lyne M.H."/>
            <person name="Lyne R."/>
            <person name="Stewart A."/>
            <person name="Sgouros J.G."/>
            <person name="Peat N."/>
            <person name="Hayles J."/>
            <person name="Baker S.G."/>
            <person name="Basham D."/>
            <person name="Bowman S."/>
            <person name="Brooks K."/>
            <person name="Brown D."/>
            <person name="Brown S."/>
            <person name="Chillingworth T."/>
            <person name="Churcher C.M."/>
            <person name="Collins M."/>
            <person name="Connor R."/>
            <person name="Cronin A."/>
            <person name="Davis P."/>
            <person name="Feltwell T."/>
            <person name="Fraser A."/>
            <person name="Gentles S."/>
            <person name="Goble A."/>
            <person name="Hamlin N."/>
            <person name="Harris D.E."/>
            <person name="Hidalgo J."/>
            <person name="Hodgson G."/>
            <person name="Holroyd S."/>
            <person name="Hornsby T."/>
            <person name="Howarth S."/>
            <person name="Huckle E.J."/>
            <person name="Hunt S."/>
            <person name="Jagels K."/>
            <person name="James K.D."/>
            <person name="Jones L."/>
            <person name="Jones M."/>
            <person name="Leather S."/>
            <person name="McDonald S."/>
            <person name="McLean J."/>
            <person name="Mooney P."/>
            <person name="Moule S."/>
            <person name="Mungall K.L."/>
            <person name="Murphy L.D."/>
            <person name="Niblett D."/>
            <person name="Odell C."/>
            <person name="Oliver K."/>
            <person name="O'Neil S."/>
            <person name="Pearson D."/>
            <person name="Quail M.A."/>
            <person name="Rabbinowitsch E."/>
            <person name="Rutherford K.M."/>
            <person name="Rutter S."/>
            <person name="Saunders D."/>
            <person name="Seeger K."/>
            <person name="Sharp S."/>
            <person name="Skelton J."/>
            <person name="Simmonds M.N."/>
            <person name="Squares R."/>
            <person name="Squares S."/>
            <person name="Stevens K."/>
            <person name="Taylor K."/>
            <person name="Taylor R.G."/>
            <person name="Tivey A."/>
            <person name="Walsh S.V."/>
            <person name="Warren T."/>
            <person name="Whitehead S."/>
            <person name="Woodward J.R."/>
            <person name="Volckaert G."/>
            <person name="Aert R."/>
            <person name="Robben J."/>
            <person name="Grymonprez B."/>
            <person name="Weltjens I."/>
            <person name="Vanstreels E."/>
            <person name="Rieger M."/>
            <person name="Schaefer M."/>
            <person name="Mueller-Auer S."/>
            <person name="Gabel C."/>
            <person name="Fuchs M."/>
            <person name="Duesterhoeft A."/>
            <person name="Fritzc C."/>
            <person name="Holzer E."/>
            <person name="Moestl D."/>
            <person name="Hilbert H."/>
            <person name="Borzym K."/>
            <person name="Langer I."/>
            <person name="Beck A."/>
            <person name="Lehrach H."/>
            <person name="Reinhardt R."/>
            <person name="Pohl T.M."/>
            <person name="Eger P."/>
            <person name="Zimmermann W."/>
            <person name="Wedler H."/>
            <person name="Wambutt R."/>
            <person name="Purnelle B."/>
            <person name="Goffeau A."/>
            <person name="Cadieu E."/>
            <person name="Dreano S."/>
            <person name="Gloux S."/>
            <person name="Lelaure V."/>
            <person name="Mottier S."/>
            <person name="Galibert F."/>
            <person name="Aves S.J."/>
            <person name="Xiang Z."/>
            <person name="Hunt C."/>
            <person name="Moore K."/>
            <person name="Hurst S.M."/>
            <person name="Lucas M."/>
            <person name="Rochet M."/>
            <person name="Gaillardin C."/>
            <person name="Tallada V.A."/>
            <person name="Garzon A."/>
            <person name="Thode G."/>
            <person name="Daga R.R."/>
            <person name="Cruzado L."/>
            <person name="Jimenez J."/>
            <person name="Sanchez M."/>
            <person name="del Rey F."/>
            <person name="Benito J."/>
            <person name="Dominguez A."/>
            <person name="Revuelta J.L."/>
            <person name="Moreno S."/>
            <person name="Armstrong J."/>
            <person name="Forsburg S.L."/>
            <person name="Cerutti L."/>
            <person name="Lowe T."/>
            <person name="McCombie W.R."/>
            <person name="Paulsen I."/>
            <person name="Potashkin J."/>
            <person name="Shpakovski G.V."/>
            <person name="Ussery D."/>
            <person name="Barrell B.G."/>
            <person name="Nurse P."/>
        </authorList>
    </citation>
    <scope>NUCLEOTIDE SEQUENCE [LARGE SCALE GENOMIC DNA]</scope>
    <source>
        <strain>972 / ATCC 24843</strain>
    </source>
</reference>
<reference key="3">
    <citation type="journal article" date="2000" name="Nature">
        <title>The Cdt1 protein is required to license DNA for replication in fission yeast.</title>
        <authorList>
            <person name="Nishitani H."/>
            <person name="Lygerou Z."/>
            <person name="Nishimoto T."/>
            <person name="Nurse P."/>
        </authorList>
    </citation>
    <scope>FUNCTION</scope>
    <scope>INTERACTION WITH CDC18</scope>
    <scope>SUBCELLULAR LOCATION</scope>
</reference>
<reference key="4">
    <citation type="journal article" date="2001" name="EMBO J.">
        <title>Expression of Cdc18/Cdc6 and Cdt1 during G2 phase induces initiation of DNA replication.</title>
        <authorList>
            <person name="Yanow S.K."/>
            <person name="Lygerou Z."/>
            <person name="Nurse P."/>
        </authorList>
    </citation>
    <scope>FUNCTION</scope>
</reference>
<reference key="5">
    <citation type="journal article" date="2006" name="EMBO Rep.">
        <title>DNA damage induces Cdt1 proteolysis in fission yeast through a pathway dependent on Cdt2 and Ddb1.</title>
        <authorList>
            <person name="Ralph E."/>
            <person name="Boye E."/>
            <person name="Kearsey S.E."/>
        </authorList>
    </citation>
    <scope>UBIQUITINATION</scope>
</reference>
<proteinExistence type="evidence at protein level"/>
<name>CDT1_SCHPO</name>
<feature type="chain" id="PRO_0000089459" description="Cell division cycle protein cdt1">
    <location>
        <begin position="1"/>
        <end position="444"/>
    </location>
</feature>
<feature type="sequence conflict" description="In Ref. 1; CAA81761." evidence="5" ref="1">
    <original>S</original>
    <variation>L</variation>
    <location>
        <position position="42"/>
    </location>
</feature>
<sequence>MKCRALYSHDNNILIFGFCVQIMSAGSQTKLNFSVRKTRSSSKRSNAAIIEPPKNPEDSQIIPAVKRLKENLDTESLEQNEVLPPVKNESVLFLEKVFNAVDICVKFHLSINTKPTFVLLENKVSGLTKISLKITHLAQILTVWPESFAITPCFTIHQGKRVATYELSYPRNANLPEAFSRSIEFKRRLEKWLLEHCSETEIPAQQLQALPSLSKNTVNESSLVRKLNLEKSTSRELRIPTQTLEPKFTTNTAKYANELVSCSMLDSSSTLSKSVNSKINLKSHQSSSSVQNSSRKLTSSQLTLRQSSLFDRVRKKQKAMEAKKAEEFKNNLVVHTLAKEKVSFVRIIDLIFVQLSTWPTKRSFSMSEIVTSMQMSISSSLSPDQCAKAIELLSKALPAWCTINLLGNIQVVTFSRIVNGKPYLRSQLIEELQTKASITILSNS</sequence>
<evidence type="ECO:0000269" key="1">
    <source>
    </source>
</evidence>
<evidence type="ECO:0000269" key="2">
    <source>
    </source>
</evidence>
<evidence type="ECO:0000269" key="3">
    <source>
    </source>
</evidence>
<evidence type="ECO:0000269" key="4">
    <source>
    </source>
</evidence>
<evidence type="ECO:0000305" key="5"/>
<gene>
    <name type="primary">cdt1</name>
    <name type="ORF">SPBC428.18</name>
</gene>
<protein>
    <recommendedName>
        <fullName>Cell division cycle protein cdt1</fullName>
    </recommendedName>
</protein>
<keyword id="KW-0131">Cell cycle</keyword>
<keyword id="KW-0132">Cell division</keyword>
<keyword id="KW-0498">Mitosis</keyword>
<keyword id="KW-0539">Nucleus</keyword>
<keyword id="KW-1185">Reference proteome</keyword>
<keyword id="KW-0832">Ubl conjugation</keyword>
<dbReference type="EMBL" id="Z27248">
    <property type="protein sequence ID" value="CAA81761.1"/>
    <property type="molecule type" value="mRNA"/>
</dbReference>
<dbReference type="EMBL" id="CU329671">
    <property type="protein sequence ID" value="CAA22293.1"/>
    <property type="molecule type" value="Genomic_DNA"/>
</dbReference>
<dbReference type="PIR" id="S41721">
    <property type="entry name" value="S41721"/>
</dbReference>
<dbReference type="RefSeq" id="NP_595196.1">
    <property type="nucleotide sequence ID" value="NM_001021103.2"/>
</dbReference>
<dbReference type="BioGRID" id="277364">
    <property type="interactions" value="9"/>
</dbReference>
<dbReference type="FunCoup" id="P40382">
    <property type="interactions" value="271"/>
</dbReference>
<dbReference type="IntAct" id="P40382">
    <property type="interactions" value="1"/>
</dbReference>
<dbReference type="MINT" id="P40382"/>
<dbReference type="STRING" id="284812.P40382"/>
<dbReference type="PaxDb" id="4896-SPBC428.18.1"/>
<dbReference type="EnsemblFungi" id="SPBC428.18.1">
    <property type="protein sequence ID" value="SPBC428.18.1:pep"/>
    <property type="gene ID" value="SPBC428.18"/>
</dbReference>
<dbReference type="GeneID" id="2540847"/>
<dbReference type="KEGG" id="spo:2540847"/>
<dbReference type="PomBase" id="SPBC428.18">
    <property type="gene designation" value="cdt1"/>
</dbReference>
<dbReference type="VEuPathDB" id="FungiDB:SPBC428.18"/>
<dbReference type="eggNOG" id="KOG4762">
    <property type="taxonomic scope" value="Eukaryota"/>
</dbReference>
<dbReference type="HOGENOM" id="CLU_654093_0_0_1"/>
<dbReference type="InParanoid" id="P40382"/>
<dbReference type="OMA" id="CIDMVQL"/>
<dbReference type="Reactome" id="R-SPO-68949">
    <property type="pathway name" value="Orc1 removal from chromatin"/>
</dbReference>
<dbReference type="Reactome" id="R-SPO-68962">
    <property type="pathway name" value="Activation of the pre-replicative complex"/>
</dbReference>
<dbReference type="PRO" id="PR:P40382"/>
<dbReference type="Proteomes" id="UP000002485">
    <property type="component" value="Chromosome II"/>
</dbReference>
<dbReference type="GO" id="GO:0000785">
    <property type="term" value="C:chromatin"/>
    <property type="evidence" value="ECO:0000314"/>
    <property type="project" value="PomBase"/>
</dbReference>
<dbReference type="GO" id="GO:0005656">
    <property type="term" value="C:nuclear pre-replicative complex"/>
    <property type="evidence" value="ECO:0000266"/>
    <property type="project" value="PomBase"/>
</dbReference>
<dbReference type="GO" id="GO:0005634">
    <property type="term" value="C:nucleus"/>
    <property type="evidence" value="ECO:0000314"/>
    <property type="project" value="PomBase"/>
</dbReference>
<dbReference type="GO" id="GO:0003677">
    <property type="term" value="F:DNA binding"/>
    <property type="evidence" value="ECO:0000318"/>
    <property type="project" value="GO_Central"/>
</dbReference>
<dbReference type="GO" id="GO:0070182">
    <property type="term" value="F:DNA polymerase binding"/>
    <property type="evidence" value="ECO:0000318"/>
    <property type="project" value="GO_Central"/>
</dbReference>
<dbReference type="GO" id="GO:0051301">
    <property type="term" value="P:cell division"/>
    <property type="evidence" value="ECO:0007669"/>
    <property type="project" value="UniProtKB-KW"/>
</dbReference>
<dbReference type="GO" id="GO:0000076">
    <property type="term" value="P:DNA replication checkpoint signaling"/>
    <property type="evidence" value="ECO:0000318"/>
    <property type="project" value="GO_Central"/>
</dbReference>
<dbReference type="GO" id="GO:0071163">
    <property type="term" value="P:DNA replication preinitiation complex assembly"/>
    <property type="evidence" value="ECO:0000318"/>
    <property type="project" value="GO_Central"/>
</dbReference>
<dbReference type="GO" id="GO:0000278">
    <property type="term" value="P:mitotic cell cycle"/>
    <property type="evidence" value="ECO:0000318"/>
    <property type="project" value="GO_Central"/>
</dbReference>
<dbReference type="GO" id="GO:1902975">
    <property type="term" value="P:mitotic DNA replication initiation"/>
    <property type="evidence" value="ECO:0000315"/>
    <property type="project" value="PomBase"/>
</dbReference>
<dbReference type="GO" id="GO:1902985">
    <property type="term" value="P:mitotic pre-replicative complex assembly"/>
    <property type="evidence" value="ECO:0000266"/>
    <property type="project" value="PomBase"/>
</dbReference>
<dbReference type="GO" id="GO:0030174">
    <property type="term" value="P:regulation of DNA-templated DNA replication initiation"/>
    <property type="evidence" value="ECO:0000318"/>
    <property type="project" value="GO_Central"/>
</dbReference>
<dbReference type="FunFam" id="1.10.10.1420:FF:000005">
    <property type="entry name" value="DNA replication factor Cdt1, putative"/>
    <property type="match status" value="1"/>
</dbReference>
<dbReference type="Gene3D" id="1.10.10.1420">
    <property type="entry name" value="DNA replication factor Cdt1, C-terminal WH domain"/>
    <property type="match status" value="1"/>
</dbReference>
<dbReference type="InterPro" id="IPR045173">
    <property type="entry name" value="Cdt1"/>
</dbReference>
<dbReference type="InterPro" id="IPR032054">
    <property type="entry name" value="Cdt1_C"/>
</dbReference>
<dbReference type="InterPro" id="IPR038090">
    <property type="entry name" value="Cdt1_C_WH_dom_sf"/>
</dbReference>
<dbReference type="InterPro" id="IPR014939">
    <property type="entry name" value="CDT1_Gemini-bd-like"/>
</dbReference>
<dbReference type="InterPro" id="IPR036390">
    <property type="entry name" value="WH_DNA-bd_sf"/>
</dbReference>
<dbReference type="PANTHER" id="PTHR28637">
    <property type="entry name" value="DNA REPLICATION FACTOR CDT1"/>
    <property type="match status" value="1"/>
</dbReference>
<dbReference type="PANTHER" id="PTHR28637:SF1">
    <property type="entry name" value="DNA REPLICATION FACTOR CDT1"/>
    <property type="match status" value="1"/>
</dbReference>
<dbReference type="Pfam" id="PF08839">
    <property type="entry name" value="CDT1"/>
    <property type="match status" value="1"/>
</dbReference>
<dbReference type="Pfam" id="PF16679">
    <property type="entry name" value="CDT1_C"/>
    <property type="match status" value="1"/>
</dbReference>
<dbReference type="SMART" id="SM01075">
    <property type="entry name" value="CDT1"/>
    <property type="match status" value="1"/>
</dbReference>
<dbReference type="SUPFAM" id="SSF46785">
    <property type="entry name" value="Winged helix' DNA-binding domain"/>
    <property type="match status" value="1"/>
</dbReference>
<accession>P40382</accession>
<accession>Q9URL6</accession>
<comment type="function">
    <text evidence="1 2 4">DNA replication licensing factor, required for pre-replication complex assembly. Faithful duplication of the genetic material requires 'once per cell cycle' DNA replication initiation and elongation. Central to this control is the tightly regulated formation of prereplicative complexes (preRCs) at future origins of DNA replication. Required for the recruitment of the MCM helicase complex to the replication origins.</text>
</comment>
<comment type="subunit">
    <text evidence="1">Interacts with cdc18.</text>
</comment>
<comment type="subcellular location">
    <subcellularLocation>
        <location evidence="1">Nucleus</location>
    </subcellularLocation>
    <text>Present in the nucleus after mitosis when DNA licensing takes place.</text>
</comment>
<comment type="PTM">
    <text evidence="3">Ubiquitinated by the DCX(DTL) complex, also named CRL4(CDT2) complex, leading to its degradation.</text>
</comment>
<comment type="similarity">
    <text evidence="5">Belongs to the Cdt1 family.</text>
</comment>
<organism>
    <name type="scientific">Schizosaccharomyces pombe (strain 972 / ATCC 24843)</name>
    <name type="common">Fission yeast</name>
    <dbReference type="NCBI Taxonomy" id="284812"/>
    <lineage>
        <taxon>Eukaryota</taxon>
        <taxon>Fungi</taxon>
        <taxon>Dikarya</taxon>
        <taxon>Ascomycota</taxon>
        <taxon>Taphrinomycotina</taxon>
        <taxon>Schizosaccharomycetes</taxon>
        <taxon>Schizosaccharomycetales</taxon>
        <taxon>Schizosaccharomycetaceae</taxon>
        <taxon>Schizosaccharomyces</taxon>
    </lineage>
</organism>